<gene>
    <name evidence="1" type="primary">dinB</name>
    <name type="ordered locus">VV1_1830</name>
</gene>
<comment type="function">
    <text evidence="1">Poorly processive, error-prone DNA polymerase involved in untargeted mutagenesis. Copies undamaged DNA at stalled replication forks, which arise in vivo from mismatched or misaligned primer ends. These misaligned primers can be extended by PolIV. Exhibits no 3'-5' exonuclease (proofreading) activity. May be involved in translesional synthesis, in conjunction with the beta clamp from PolIII.</text>
</comment>
<comment type="catalytic activity">
    <reaction evidence="1">
        <text>DNA(n) + a 2'-deoxyribonucleoside 5'-triphosphate = DNA(n+1) + diphosphate</text>
        <dbReference type="Rhea" id="RHEA:22508"/>
        <dbReference type="Rhea" id="RHEA-COMP:17339"/>
        <dbReference type="Rhea" id="RHEA-COMP:17340"/>
        <dbReference type="ChEBI" id="CHEBI:33019"/>
        <dbReference type="ChEBI" id="CHEBI:61560"/>
        <dbReference type="ChEBI" id="CHEBI:173112"/>
        <dbReference type="EC" id="2.7.7.7"/>
    </reaction>
</comment>
<comment type="cofactor">
    <cofactor evidence="1">
        <name>Mg(2+)</name>
        <dbReference type="ChEBI" id="CHEBI:18420"/>
    </cofactor>
    <text evidence="1">Binds 2 magnesium ions per subunit.</text>
</comment>
<comment type="subunit">
    <text evidence="1">Monomer.</text>
</comment>
<comment type="subcellular location">
    <subcellularLocation>
        <location evidence="1">Cytoplasm</location>
    </subcellularLocation>
</comment>
<comment type="similarity">
    <text evidence="1">Belongs to the DNA polymerase type-Y family.</text>
</comment>
<sequence length="354" mass="40382">MSTQMRKIIHIDMDCFYAAVEMRDNPNFRSRPLAVGGHEKQRGVISTCNYEARKFGVRSAMPTAQALKLCPSLLVVPGRMQVYKEVSTHIRSIFSRYTHLIEPLSLDEAYLDVTDSTQCHGSATLIAEAIRRDIWNELQLTASAGVAPIKFLAKVASDMNKPNGQFVIPPEQVQSVIDTLPLQKIPGVGKVSLEKLNQAGLYVCQDVKNSDYRQLLKQFGRLGASLWQRSHGIDEREVIVERERKSVGVERTFTQNIVTYEQCWQVIEEKLFPELAIRLEKANPEKAIIKQGIKMKFADFQLTTIEHVHHELELAYFRELLQDILQRQKGREIRLLGLSVMLKPEEQARQLSLL</sequence>
<name>DPO4_VIBVU</name>
<protein>
    <recommendedName>
        <fullName evidence="1">DNA polymerase IV</fullName>
        <shortName evidence="1">Pol IV</shortName>
        <ecNumber evidence="1">2.7.7.7</ecNumber>
    </recommendedName>
</protein>
<evidence type="ECO:0000255" key="1">
    <source>
        <dbReference type="HAMAP-Rule" id="MF_01113"/>
    </source>
</evidence>
<keyword id="KW-0963">Cytoplasm</keyword>
<keyword id="KW-0227">DNA damage</keyword>
<keyword id="KW-0234">DNA repair</keyword>
<keyword id="KW-0235">DNA replication</keyword>
<keyword id="KW-0238">DNA-binding</keyword>
<keyword id="KW-0239">DNA-directed DNA polymerase</keyword>
<keyword id="KW-0460">Magnesium</keyword>
<keyword id="KW-0479">Metal-binding</keyword>
<keyword id="KW-0515">Mutator protein</keyword>
<keyword id="KW-0548">Nucleotidyltransferase</keyword>
<keyword id="KW-0808">Transferase</keyword>
<proteinExistence type="inferred from homology"/>
<dbReference type="EC" id="2.7.7.7" evidence="1"/>
<dbReference type="EMBL" id="AE016795">
    <property type="protein sequence ID" value="AAO10236.2"/>
    <property type="molecule type" value="Genomic_DNA"/>
</dbReference>
<dbReference type="RefSeq" id="WP_011079736.1">
    <property type="nucleotide sequence ID" value="NC_004459.3"/>
</dbReference>
<dbReference type="SMR" id="Q8DBI7"/>
<dbReference type="KEGG" id="vvu:VV1_1830"/>
<dbReference type="HOGENOM" id="CLU_012348_1_2_6"/>
<dbReference type="Proteomes" id="UP000002275">
    <property type="component" value="Chromosome 1"/>
</dbReference>
<dbReference type="GO" id="GO:0005829">
    <property type="term" value="C:cytosol"/>
    <property type="evidence" value="ECO:0007669"/>
    <property type="project" value="TreeGrafter"/>
</dbReference>
<dbReference type="GO" id="GO:0003684">
    <property type="term" value="F:damaged DNA binding"/>
    <property type="evidence" value="ECO:0007669"/>
    <property type="project" value="InterPro"/>
</dbReference>
<dbReference type="GO" id="GO:0003887">
    <property type="term" value="F:DNA-directed DNA polymerase activity"/>
    <property type="evidence" value="ECO:0007669"/>
    <property type="project" value="UniProtKB-UniRule"/>
</dbReference>
<dbReference type="GO" id="GO:0000287">
    <property type="term" value="F:magnesium ion binding"/>
    <property type="evidence" value="ECO:0007669"/>
    <property type="project" value="UniProtKB-UniRule"/>
</dbReference>
<dbReference type="GO" id="GO:0006261">
    <property type="term" value="P:DNA-templated DNA replication"/>
    <property type="evidence" value="ECO:0007669"/>
    <property type="project" value="UniProtKB-UniRule"/>
</dbReference>
<dbReference type="GO" id="GO:0042276">
    <property type="term" value="P:error-prone translesion synthesis"/>
    <property type="evidence" value="ECO:0007669"/>
    <property type="project" value="TreeGrafter"/>
</dbReference>
<dbReference type="GO" id="GO:0009432">
    <property type="term" value="P:SOS response"/>
    <property type="evidence" value="ECO:0007669"/>
    <property type="project" value="TreeGrafter"/>
</dbReference>
<dbReference type="CDD" id="cd03586">
    <property type="entry name" value="PolY_Pol_IV_kappa"/>
    <property type="match status" value="1"/>
</dbReference>
<dbReference type="FunFam" id="1.10.150.20:FF:000019">
    <property type="entry name" value="DNA polymerase IV"/>
    <property type="match status" value="1"/>
</dbReference>
<dbReference type="FunFam" id="3.30.1490.100:FF:000002">
    <property type="entry name" value="DNA polymerase IV"/>
    <property type="match status" value="1"/>
</dbReference>
<dbReference type="FunFam" id="3.30.70.270:FF:000002">
    <property type="entry name" value="DNA polymerase IV"/>
    <property type="match status" value="1"/>
</dbReference>
<dbReference type="FunFam" id="3.40.1170.60:FF:000001">
    <property type="entry name" value="DNA polymerase IV"/>
    <property type="match status" value="1"/>
</dbReference>
<dbReference type="Gene3D" id="3.30.70.270">
    <property type="match status" value="1"/>
</dbReference>
<dbReference type="Gene3D" id="3.40.1170.60">
    <property type="match status" value="1"/>
</dbReference>
<dbReference type="Gene3D" id="1.10.150.20">
    <property type="entry name" value="5' to 3' exonuclease, C-terminal subdomain"/>
    <property type="match status" value="1"/>
</dbReference>
<dbReference type="Gene3D" id="3.30.1490.100">
    <property type="entry name" value="DNA polymerase, Y-family, little finger domain"/>
    <property type="match status" value="1"/>
</dbReference>
<dbReference type="HAMAP" id="MF_01113">
    <property type="entry name" value="DNApol_IV"/>
    <property type="match status" value="1"/>
</dbReference>
<dbReference type="InterPro" id="IPR043502">
    <property type="entry name" value="DNA/RNA_pol_sf"/>
</dbReference>
<dbReference type="InterPro" id="IPR036775">
    <property type="entry name" value="DNA_pol_Y-fam_lit_finger_sf"/>
</dbReference>
<dbReference type="InterPro" id="IPR017961">
    <property type="entry name" value="DNA_pol_Y-fam_little_finger"/>
</dbReference>
<dbReference type="InterPro" id="IPR050116">
    <property type="entry name" value="DNA_polymerase-Y"/>
</dbReference>
<dbReference type="InterPro" id="IPR022880">
    <property type="entry name" value="DNApol_IV"/>
</dbReference>
<dbReference type="InterPro" id="IPR053848">
    <property type="entry name" value="IMS_HHH_1"/>
</dbReference>
<dbReference type="InterPro" id="IPR043128">
    <property type="entry name" value="Rev_trsase/Diguanyl_cyclase"/>
</dbReference>
<dbReference type="InterPro" id="IPR001126">
    <property type="entry name" value="UmuC"/>
</dbReference>
<dbReference type="NCBIfam" id="NF002677">
    <property type="entry name" value="PRK02406.1"/>
    <property type="match status" value="1"/>
</dbReference>
<dbReference type="PANTHER" id="PTHR11076:SF33">
    <property type="entry name" value="DNA POLYMERASE KAPPA"/>
    <property type="match status" value="1"/>
</dbReference>
<dbReference type="PANTHER" id="PTHR11076">
    <property type="entry name" value="DNA REPAIR POLYMERASE UMUC / TRANSFERASE FAMILY MEMBER"/>
    <property type="match status" value="1"/>
</dbReference>
<dbReference type="Pfam" id="PF00817">
    <property type="entry name" value="IMS"/>
    <property type="match status" value="1"/>
</dbReference>
<dbReference type="Pfam" id="PF11799">
    <property type="entry name" value="IMS_C"/>
    <property type="match status" value="1"/>
</dbReference>
<dbReference type="Pfam" id="PF21999">
    <property type="entry name" value="IMS_HHH_1"/>
    <property type="match status" value="1"/>
</dbReference>
<dbReference type="SUPFAM" id="SSF56672">
    <property type="entry name" value="DNA/RNA polymerases"/>
    <property type="match status" value="1"/>
</dbReference>
<dbReference type="SUPFAM" id="SSF100879">
    <property type="entry name" value="Lesion bypass DNA polymerase (Y-family), little finger domain"/>
    <property type="match status" value="1"/>
</dbReference>
<dbReference type="PROSITE" id="PS50173">
    <property type="entry name" value="UMUC"/>
    <property type="match status" value="1"/>
</dbReference>
<accession>Q8DBI7</accession>
<feature type="chain" id="PRO_0000173964" description="DNA polymerase IV">
    <location>
        <begin position="1"/>
        <end position="354"/>
    </location>
</feature>
<feature type="domain" description="UmuC" evidence="1">
    <location>
        <begin position="8"/>
        <end position="189"/>
    </location>
</feature>
<feature type="active site" evidence="1">
    <location>
        <position position="108"/>
    </location>
</feature>
<feature type="binding site" evidence="1">
    <location>
        <position position="12"/>
    </location>
    <ligand>
        <name>Mg(2+)</name>
        <dbReference type="ChEBI" id="CHEBI:18420"/>
    </ligand>
</feature>
<feature type="binding site" evidence="1">
    <location>
        <position position="107"/>
    </location>
    <ligand>
        <name>Mg(2+)</name>
        <dbReference type="ChEBI" id="CHEBI:18420"/>
    </ligand>
</feature>
<feature type="site" description="Substrate discrimination" evidence="1">
    <location>
        <position position="17"/>
    </location>
</feature>
<reference key="1">
    <citation type="submission" date="2002-12" db="EMBL/GenBank/DDBJ databases">
        <title>Complete genome sequence of Vibrio vulnificus CMCP6.</title>
        <authorList>
            <person name="Rhee J.H."/>
            <person name="Kim S.Y."/>
            <person name="Chung S.S."/>
            <person name="Kim J.J."/>
            <person name="Moon Y.H."/>
            <person name="Jeong H."/>
            <person name="Choy H.E."/>
        </authorList>
    </citation>
    <scope>NUCLEOTIDE SEQUENCE [LARGE SCALE GENOMIC DNA]</scope>
    <source>
        <strain>CMCP6</strain>
    </source>
</reference>
<organism>
    <name type="scientific">Vibrio vulnificus (strain CMCP6)</name>
    <dbReference type="NCBI Taxonomy" id="216895"/>
    <lineage>
        <taxon>Bacteria</taxon>
        <taxon>Pseudomonadati</taxon>
        <taxon>Pseudomonadota</taxon>
        <taxon>Gammaproteobacteria</taxon>
        <taxon>Vibrionales</taxon>
        <taxon>Vibrionaceae</taxon>
        <taxon>Vibrio</taxon>
    </lineage>
</organism>